<organism>
    <name type="scientific">Homo sapiens</name>
    <name type="common">Human</name>
    <dbReference type="NCBI Taxonomy" id="9606"/>
    <lineage>
        <taxon>Eukaryota</taxon>
        <taxon>Metazoa</taxon>
        <taxon>Chordata</taxon>
        <taxon>Craniata</taxon>
        <taxon>Vertebrata</taxon>
        <taxon>Euteleostomi</taxon>
        <taxon>Mammalia</taxon>
        <taxon>Eutheria</taxon>
        <taxon>Euarchontoglires</taxon>
        <taxon>Primates</taxon>
        <taxon>Haplorrhini</taxon>
        <taxon>Catarrhini</taxon>
        <taxon>Hominidae</taxon>
        <taxon>Homo</taxon>
    </lineage>
</organism>
<evidence type="ECO:0000255" key="1"/>
<evidence type="ECO:0000255" key="2">
    <source>
        <dbReference type="PROSITE-ProRule" id="PRU00720"/>
    </source>
</evidence>
<evidence type="ECO:0000255" key="3">
    <source>
        <dbReference type="PROSITE-ProRule" id="PRU01055"/>
    </source>
</evidence>
<evidence type="ECO:0000269" key="4">
    <source>
    </source>
</evidence>
<evidence type="ECO:0000269" key="5">
    <source>
    </source>
</evidence>
<evidence type="ECO:0000269" key="6">
    <source>
    </source>
</evidence>
<evidence type="ECO:0000269" key="7">
    <source>
    </source>
</evidence>
<evidence type="ECO:0000269" key="8">
    <source>
    </source>
</evidence>
<evidence type="ECO:0000303" key="9">
    <source>
    </source>
</evidence>
<evidence type="ECO:0007829" key="10">
    <source>
        <dbReference type="PDB" id="4WHJ"/>
    </source>
</evidence>
<evidence type="ECO:0007829" key="11">
    <source>
        <dbReference type="PDB" id="4X0R"/>
    </source>
</evidence>
<gene>
    <name type="primary">MX2</name>
</gene>
<reference key="1">
    <citation type="journal article" date="1989" name="Mol. Cell. Biol.">
        <title>cDNA structures and regulation of two interferon-induced human Mx proteins.</title>
        <authorList>
            <person name="Aebi M."/>
            <person name="Faeh J."/>
            <person name="Hurt N."/>
            <person name="Samuel C.E."/>
            <person name="Thomis D."/>
            <person name="Bazzigher L."/>
            <person name="Pavlovic J."/>
            <person name="Haller O."/>
            <person name="Staeheli P."/>
        </authorList>
    </citation>
    <scope>NUCLEOTIDE SEQUENCE [MRNA] (ISOFORM 1)</scope>
</reference>
<reference key="2">
    <citation type="journal article" date="2004" name="Nat. Genet.">
        <title>Complete sequencing and characterization of 21,243 full-length human cDNAs.</title>
        <authorList>
            <person name="Ota T."/>
            <person name="Suzuki Y."/>
            <person name="Nishikawa T."/>
            <person name="Otsuki T."/>
            <person name="Sugiyama T."/>
            <person name="Irie R."/>
            <person name="Wakamatsu A."/>
            <person name="Hayashi K."/>
            <person name="Sato H."/>
            <person name="Nagai K."/>
            <person name="Kimura K."/>
            <person name="Makita H."/>
            <person name="Sekine M."/>
            <person name="Obayashi M."/>
            <person name="Nishi T."/>
            <person name="Shibahara T."/>
            <person name="Tanaka T."/>
            <person name="Ishii S."/>
            <person name="Yamamoto J."/>
            <person name="Saito K."/>
            <person name="Kawai Y."/>
            <person name="Isono Y."/>
            <person name="Nakamura Y."/>
            <person name="Nagahari K."/>
            <person name="Murakami K."/>
            <person name="Yasuda T."/>
            <person name="Iwayanagi T."/>
            <person name="Wagatsuma M."/>
            <person name="Shiratori A."/>
            <person name="Sudo H."/>
            <person name="Hosoiri T."/>
            <person name="Kaku Y."/>
            <person name="Kodaira H."/>
            <person name="Kondo H."/>
            <person name="Sugawara M."/>
            <person name="Takahashi M."/>
            <person name="Kanda K."/>
            <person name="Yokoi T."/>
            <person name="Furuya T."/>
            <person name="Kikkawa E."/>
            <person name="Omura Y."/>
            <person name="Abe K."/>
            <person name="Kamihara K."/>
            <person name="Katsuta N."/>
            <person name="Sato K."/>
            <person name="Tanikawa M."/>
            <person name="Yamazaki M."/>
            <person name="Ninomiya K."/>
            <person name="Ishibashi T."/>
            <person name="Yamashita H."/>
            <person name="Murakawa K."/>
            <person name="Fujimori K."/>
            <person name="Tanai H."/>
            <person name="Kimata M."/>
            <person name="Watanabe M."/>
            <person name="Hiraoka S."/>
            <person name="Chiba Y."/>
            <person name="Ishida S."/>
            <person name="Ono Y."/>
            <person name="Takiguchi S."/>
            <person name="Watanabe S."/>
            <person name="Yosida M."/>
            <person name="Hotuta T."/>
            <person name="Kusano J."/>
            <person name="Kanehori K."/>
            <person name="Takahashi-Fujii A."/>
            <person name="Hara H."/>
            <person name="Tanase T.-O."/>
            <person name="Nomura Y."/>
            <person name="Togiya S."/>
            <person name="Komai F."/>
            <person name="Hara R."/>
            <person name="Takeuchi K."/>
            <person name="Arita M."/>
            <person name="Imose N."/>
            <person name="Musashino K."/>
            <person name="Yuuki H."/>
            <person name="Oshima A."/>
            <person name="Sasaki N."/>
            <person name="Aotsuka S."/>
            <person name="Yoshikawa Y."/>
            <person name="Matsunawa H."/>
            <person name="Ichihara T."/>
            <person name="Shiohata N."/>
            <person name="Sano S."/>
            <person name="Moriya S."/>
            <person name="Momiyama H."/>
            <person name="Satoh N."/>
            <person name="Takami S."/>
            <person name="Terashima Y."/>
            <person name="Suzuki O."/>
            <person name="Nakagawa S."/>
            <person name="Senoh A."/>
            <person name="Mizoguchi H."/>
            <person name="Goto Y."/>
            <person name="Shimizu F."/>
            <person name="Wakebe H."/>
            <person name="Hishigaki H."/>
            <person name="Watanabe T."/>
            <person name="Sugiyama A."/>
            <person name="Takemoto M."/>
            <person name="Kawakami B."/>
            <person name="Yamazaki M."/>
            <person name="Watanabe K."/>
            <person name="Kumagai A."/>
            <person name="Itakura S."/>
            <person name="Fukuzumi Y."/>
            <person name="Fujimori Y."/>
            <person name="Komiyama M."/>
            <person name="Tashiro H."/>
            <person name="Tanigami A."/>
            <person name="Fujiwara T."/>
            <person name="Ono T."/>
            <person name="Yamada K."/>
            <person name="Fujii Y."/>
            <person name="Ozaki K."/>
            <person name="Hirao M."/>
            <person name="Ohmori Y."/>
            <person name="Kawabata A."/>
            <person name="Hikiji T."/>
            <person name="Kobatake N."/>
            <person name="Inagaki H."/>
            <person name="Ikema Y."/>
            <person name="Okamoto S."/>
            <person name="Okitani R."/>
            <person name="Kawakami T."/>
            <person name="Noguchi S."/>
            <person name="Itoh T."/>
            <person name="Shigeta K."/>
            <person name="Senba T."/>
            <person name="Matsumura K."/>
            <person name="Nakajima Y."/>
            <person name="Mizuno T."/>
            <person name="Morinaga M."/>
            <person name="Sasaki M."/>
            <person name="Togashi T."/>
            <person name="Oyama M."/>
            <person name="Hata H."/>
            <person name="Watanabe M."/>
            <person name="Komatsu T."/>
            <person name="Mizushima-Sugano J."/>
            <person name="Satoh T."/>
            <person name="Shirai Y."/>
            <person name="Takahashi Y."/>
            <person name="Nakagawa K."/>
            <person name="Okumura K."/>
            <person name="Nagase T."/>
            <person name="Nomura N."/>
            <person name="Kikuchi H."/>
            <person name="Masuho Y."/>
            <person name="Yamashita R."/>
            <person name="Nakai K."/>
            <person name="Yada T."/>
            <person name="Nakamura Y."/>
            <person name="Ohara O."/>
            <person name="Isogai T."/>
            <person name="Sugano S."/>
        </authorList>
    </citation>
    <scope>NUCLEOTIDE SEQUENCE [LARGE SCALE MRNA] (ISOFORM 2)</scope>
</reference>
<reference key="3">
    <citation type="journal article" date="2000" name="Nature">
        <title>The DNA sequence of human chromosome 21.</title>
        <authorList>
            <person name="Hattori M."/>
            <person name="Fujiyama A."/>
            <person name="Taylor T.D."/>
            <person name="Watanabe H."/>
            <person name="Yada T."/>
            <person name="Park H.-S."/>
            <person name="Toyoda A."/>
            <person name="Ishii K."/>
            <person name="Totoki Y."/>
            <person name="Choi D.-K."/>
            <person name="Groner Y."/>
            <person name="Soeda E."/>
            <person name="Ohki M."/>
            <person name="Takagi T."/>
            <person name="Sakaki Y."/>
            <person name="Taudien S."/>
            <person name="Blechschmidt K."/>
            <person name="Polley A."/>
            <person name="Menzel U."/>
            <person name="Delabar J."/>
            <person name="Kumpf K."/>
            <person name="Lehmann R."/>
            <person name="Patterson D."/>
            <person name="Reichwald K."/>
            <person name="Rump A."/>
            <person name="Schillhabel M."/>
            <person name="Schudy A."/>
            <person name="Zimmermann W."/>
            <person name="Rosenthal A."/>
            <person name="Kudoh J."/>
            <person name="Shibuya K."/>
            <person name="Kawasaki K."/>
            <person name="Asakawa S."/>
            <person name="Shintani A."/>
            <person name="Sasaki T."/>
            <person name="Nagamine K."/>
            <person name="Mitsuyama S."/>
            <person name="Antonarakis S.E."/>
            <person name="Minoshima S."/>
            <person name="Shimizu N."/>
            <person name="Nordsiek G."/>
            <person name="Hornischer K."/>
            <person name="Brandt P."/>
            <person name="Scharfe M."/>
            <person name="Schoen O."/>
            <person name="Desario A."/>
            <person name="Reichelt J."/>
            <person name="Kauer G."/>
            <person name="Bloecker H."/>
            <person name="Ramser J."/>
            <person name="Beck A."/>
            <person name="Klages S."/>
            <person name="Hennig S."/>
            <person name="Riesselmann L."/>
            <person name="Dagand E."/>
            <person name="Wehrmeyer S."/>
            <person name="Borzym K."/>
            <person name="Gardiner K."/>
            <person name="Nizetic D."/>
            <person name="Francis F."/>
            <person name="Lehrach H."/>
            <person name="Reinhardt R."/>
            <person name="Yaspo M.-L."/>
        </authorList>
    </citation>
    <scope>NUCLEOTIDE SEQUENCE [LARGE SCALE GENOMIC DNA]</scope>
</reference>
<reference key="4">
    <citation type="submission" date="2005-09" db="EMBL/GenBank/DDBJ databases">
        <authorList>
            <person name="Mural R.J."/>
            <person name="Istrail S."/>
            <person name="Sutton G.G."/>
            <person name="Florea L."/>
            <person name="Halpern A.L."/>
            <person name="Mobarry C.M."/>
            <person name="Lippert R."/>
            <person name="Walenz B."/>
            <person name="Shatkay H."/>
            <person name="Dew I."/>
            <person name="Miller J.R."/>
            <person name="Flanigan M.J."/>
            <person name="Edwards N.J."/>
            <person name="Bolanos R."/>
            <person name="Fasulo D."/>
            <person name="Halldorsson B.V."/>
            <person name="Hannenhalli S."/>
            <person name="Turner R."/>
            <person name="Yooseph S."/>
            <person name="Lu F."/>
            <person name="Nusskern D.R."/>
            <person name="Shue B.C."/>
            <person name="Zheng X.H."/>
            <person name="Zhong F."/>
            <person name="Delcher A.L."/>
            <person name="Huson D.H."/>
            <person name="Kravitz S.A."/>
            <person name="Mouchard L."/>
            <person name="Reinert K."/>
            <person name="Remington K.A."/>
            <person name="Clark A.G."/>
            <person name="Waterman M.S."/>
            <person name="Eichler E.E."/>
            <person name="Adams M.D."/>
            <person name="Hunkapiller M.W."/>
            <person name="Myers E.W."/>
            <person name="Venter J.C."/>
        </authorList>
    </citation>
    <scope>NUCLEOTIDE SEQUENCE [LARGE SCALE GENOMIC DNA]</scope>
</reference>
<reference key="5">
    <citation type="journal article" date="2004" name="Genome Res.">
        <title>The status, quality, and expansion of the NIH full-length cDNA project: the Mammalian Gene Collection (MGC).</title>
        <authorList>
            <consortium name="The MGC Project Team"/>
        </authorList>
    </citation>
    <scope>NUCLEOTIDE SEQUENCE [LARGE SCALE MRNA] (ISOFORM 1)</scope>
    <source>
        <tissue>Brain</tissue>
    </source>
</reference>
<reference key="6">
    <citation type="journal article" date="1990" name="J. Virol.">
        <title>Cloning and sequence analyses of cDNAs for interferon- and virus-induced human Mx proteins reveal that they contain putative guanine nucleotide-binding sites: functional study of the corresponding gene promoter.</title>
        <authorList>
            <person name="Horisberger M.A."/>
            <person name="McMaster G.K."/>
            <person name="Zeller H."/>
            <person name="Wathelet M.G."/>
            <person name="Dellis J."/>
            <person name="Content J."/>
        </authorList>
    </citation>
    <scope>NUCLEOTIDE SEQUENCE [MRNA] OF 29-715 (ISOFORM 1)</scope>
</reference>
<reference key="7">
    <citation type="journal article" date="2004" name="Proc. Natl. Acad. Sci. U.S.A.">
        <title>Inhibition of nuclear import and cell-cycle progression by mutated forms of the dynamin-like GTPase MxB.</title>
        <authorList>
            <person name="King M.C."/>
            <person name="Raposo G."/>
            <person name="Lemmon M.A."/>
        </authorList>
    </citation>
    <scope>FUNCTION</scope>
    <scope>SUBCELLULAR LOCATION</scope>
    <scope>MUTAGENESIS OF LYS-131 AND THR-151</scope>
</reference>
<reference key="8">
    <citation type="journal article" date="2007" name="Microbes Infect.">
        <title>The Mx GTPase family of interferon-induced antiviral proteins.</title>
        <authorList>
            <person name="Haller O."/>
            <person name="Stertz S."/>
            <person name="Kochs G."/>
        </authorList>
    </citation>
    <scope>REVIEW</scope>
    <scope>INDUCTION</scope>
</reference>
<reference key="9">
    <citation type="journal article" date="2011" name="BMC Syst. Biol.">
        <title>Initial characterization of the human central proteome.</title>
        <authorList>
            <person name="Burkard T.R."/>
            <person name="Planyavsky M."/>
            <person name="Kaupe I."/>
            <person name="Breitwieser F.P."/>
            <person name="Buerckstuemmer T."/>
            <person name="Bennett K.L."/>
            <person name="Superti-Furga G."/>
            <person name="Colinge J."/>
        </authorList>
    </citation>
    <scope>IDENTIFICATION BY MASS SPECTROMETRY [LARGE SCALE ANALYSIS]</scope>
</reference>
<reference key="10">
    <citation type="journal article" date="2013" name="Cell Host Microbe">
        <title>Dynamins are forever: MxB inhibits HIV-1.</title>
        <authorList>
            <person name="Haller O."/>
        </authorList>
    </citation>
    <scope>REVIEW</scope>
</reference>
<reference key="11">
    <citation type="journal article" date="2013" name="Cell Host Microbe">
        <title>The interferon-inducible MxB protein inhibits HIV-1 infection.</title>
        <authorList>
            <person name="Liu Z."/>
            <person name="Pan Q."/>
            <person name="Ding S."/>
            <person name="Qian J."/>
            <person name="Xu F."/>
            <person name="Zhou J."/>
            <person name="Cen S."/>
            <person name="Guo F."/>
            <person name="Liang C."/>
        </authorList>
    </citation>
    <scope>FUNCTION IN HIV-1 RESTRICTION</scope>
</reference>
<reference key="12">
    <citation type="journal article" date="2013" name="Nature">
        <title>Human MX2 is an interferon-induced post-entry inhibitor of HIV-1 infection.</title>
        <authorList>
            <person name="Goujon C."/>
            <person name="Moncorge O."/>
            <person name="Bauby H."/>
            <person name="Doyle T."/>
            <person name="Ward C.C."/>
            <person name="Schaller T."/>
            <person name="Hue S."/>
            <person name="Barclay W.S."/>
            <person name="Schulz R."/>
            <person name="Malim M.H."/>
        </authorList>
    </citation>
    <scope>FUNCTION IN HIV-1 RESTRICTION</scope>
</reference>
<reference key="13">
    <citation type="journal article" date="2013" name="Nature">
        <title>MX2 is an interferon-induced inhibitor of HIV-1 infection.</title>
        <authorList>
            <person name="Kane M."/>
            <person name="Yadav S.S."/>
            <person name="Bitzegeio J."/>
            <person name="Kutluay S.B."/>
            <person name="Zang T."/>
            <person name="Wilson S.J."/>
            <person name="Schoggins J.W."/>
            <person name="Rice C.M."/>
            <person name="Yamashita M."/>
            <person name="Hatziioannou T."/>
            <person name="Bieniasz P.D."/>
        </authorList>
    </citation>
    <scope>FUNCTION IN HIV-1 RESTRICTION</scope>
</reference>
<dbReference type="EMBL" id="M30818">
    <property type="protein sequence ID" value="AAA36338.1"/>
    <property type="molecule type" value="mRNA"/>
</dbReference>
<dbReference type="EMBL" id="M33883">
    <property type="protein sequence ID" value="AAA36459.1"/>
    <property type="molecule type" value="mRNA"/>
</dbReference>
<dbReference type="EMBL" id="AK298780">
    <property type="protein sequence ID" value="BAH12869.1"/>
    <property type="molecule type" value="mRNA"/>
</dbReference>
<dbReference type="EMBL" id="AL163285">
    <property type="protein sequence ID" value="CAB90555.1"/>
    <property type="molecule type" value="Genomic_DNA"/>
</dbReference>
<dbReference type="EMBL" id="AL773578">
    <property type="status" value="NOT_ANNOTATED_CDS"/>
    <property type="molecule type" value="Genomic_DNA"/>
</dbReference>
<dbReference type="EMBL" id="CH471079">
    <property type="protein sequence ID" value="EAX09605.1"/>
    <property type="molecule type" value="Genomic_DNA"/>
</dbReference>
<dbReference type="EMBL" id="CH471079">
    <property type="protein sequence ID" value="EAX09606.1"/>
    <property type="molecule type" value="Genomic_DNA"/>
</dbReference>
<dbReference type="EMBL" id="BC035293">
    <property type="protein sequence ID" value="AAH35293.1"/>
    <property type="molecule type" value="mRNA"/>
</dbReference>
<dbReference type="CCDS" id="CCDS13672.1">
    <molecule id="P20592-1"/>
</dbReference>
<dbReference type="PIR" id="B33481">
    <property type="entry name" value="B33481"/>
</dbReference>
<dbReference type="RefSeq" id="NP_002454.1">
    <molecule id="P20592-1"/>
    <property type="nucleotide sequence ID" value="NM_002463.2"/>
</dbReference>
<dbReference type="RefSeq" id="XP_005261040.1">
    <molecule id="P20592-1"/>
    <property type="nucleotide sequence ID" value="XM_005260983.6"/>
</dbReference>
<dbReference type="RefSeq" id="XP_005261041.1">
    <molecule id="P20592-1"/>
    <property type="nucleotide sequence ID" value="XM_005260984.2"/>
</dbReference>
<dbReference type="RefSeq" id="XP_011527873.1">
    <property type="nucleotide sequence ID" value="XM_011529571.1"/>
</dbReference>
<dbReference type="RefSeq" id="XP_011527874.1">
    <molecule id="P20592-1"/>
    <property type="nucleotide sequence ID" value="XM_011529572.3"/>
</dbReference>
<dbReference type="RefSeq" id="XP_024307848.1">
    <molecule id="P20592-1"/>
    <property type="nucleotide sequence ID" value="XM_024452080.2"/>
</dbReference>
<dbReference type="RefSeq" id="XP_047296735.1">
    <molecule id="P20592-1"/>
    <property type="nucleotide sequence ID" value="XM_047440779.1"/>
</dbReference>
<dbReference type="RefSeq" id="XP_047296736.1">
    <molecule id="P20592-1"/>
    <property type="nucleotide sequence ID" value="XM_047440780.1"/>
</dbReference>
<dbReference type="RefSeq" id="XP_054180479.1">
    <molecule id="P20592-1"/>
    <property type="nucleotide sequence ID" value="XM_054324504.1"/>
</dbReference>
<dbReference type="RefSeq" id="XP_054180480.1">
    <molecule id="P20592-1"/>
    <property type="nucleotide sequence ID" value="XM_054324505.1"/>
</dbReference>
<dbReference type="RefSeq" id="XP_054180481.1">
    <molecule id="P20592-1"/>
    <property type="nucleotide sequence ID" value="XM_054324506.1"/>
</dbReference>
<dbReference type="RefSeq" id="XP_054180482.1">
    <molecule id="P20592-1"/>
    <property type="nucleotide sequence ID" value="XM_054324507.1"/>
</dbReference>
<dbReference type="RefSeq" id="XP_054180483.1">
    <molecule id="P20592-1"/>
    <property type="nucleotide sequence ID" value="XM_054324508.1"/>
</dbReference>
<dbReference type="RefSeq" id="XP_054180484.1">
    <molecule id="P20592-1"/>
    <property type="nucleotide sequence ID" value="XM_054324509.1"/>
</dbReference>
<dbReference type="PDB" id="4WHJ">
    <property type="method" value="X-ray"/>
    <property type="resolution" value="3.20 A"/>
    <property type="chains" value="A/B=84-715"/>
</dbReference>
<dbReference type="PDB" id="4X0R">
    <property type="method" value="X-ray"/>
    <property type="resolution" value="2.90 A"/>
    <property type="chains" value="A/B=413-678"/>
</dbReference>
<dbReference type="PDB" id="5UOT">
    <property type="method" value="EM"/>
    <property type="resolution" value="4.60 A"/>
    <property type="chains" value="0/1/2/3/4/5/6/7/8/9/A/B/C/D/E/F/G/H/I/J/K/L/M/N/O/P/Q/R/S/T=93-711"/>
</dbReference>
<dbReference type="PDBsum" id="4WHJ"/>
<dbReference type="PDBsum" id="4X0R"/>
<dbReference type="PDBsum" id="5UOT"/>
<dbReference type="EMDB" id="EMD-8577"/>
<dbReference type="SMR" id="P20592"/>
<dbReference type="BioGRID" id="110685">
    <property type="interactions" value="21"/>
</dbReference>
<dbReference type="DIP" id="DIP-59212N"/>
<dbReference type="FunCoup" id="P20592">
    <property type="interactions" value="242"/>
</dbReference>
<dbReference type="IntAct" id="P20592">
    <property type="interactions" value="7"/>
</dbReference>
<dbReference type="STRING" id="9606.ENSP00000333657"/>
<dbReference type="TCDB" id="1.I.1.1.3">
    <property type="family name" value="the nuclear pore complex (npc) family"/>
</dbReference>
<dbReference type="GlyGen" id="P20592">
    <property type="glycosylation" value="1 site"/>
</dbReference>
<dbReference type="iPTMnet" id="P20592"/>
<dbReference type="PhosphoSitePlus" id="P20592"/>
<dbReference type="SwissPalm" id="P20592"/>
<dbReference type="BioMuta" id="MX2"/>
<dbReference type="DMDM" id="127571"/>
<dbReference type="jPOST" id="P20592"/>
<dbReference type="MassIVE" id="P20592"/>
<dbReference type="PaxDb" id="9606-ENSP00000333657"/>
<dbReference type="PeptideAtlas" id="P20592"/>
<dbReference type="ProteomicsDB" id="53765">
    <molecule id="P20592-1"/>
</dbReference>
<dbReference type="ProteomicsDB" id="6679"/>
<dbReference type="Antibodypedia" id="23558">
    <property type="antibodies" value="125 antibodies from 25 providers"/>
</dbReference>
<dbReference type="DNASU" id="4600"/>
<dbReference type="Ensembl" id="ENST00000330714.8">
    <molecule id="P20592-1"/>
    <property type="protein sequence ID" value="ENSP00000333657.3"/>
    <property type="gene ID" value="ENSG00000183486.14"/>
</dbReference>
<dbReference type="Ensembl" id="ENST00000418103.2">
    <molecule id="P20592-2"/>
    <property type="protein sequence ID" value="ENSP00000410188.2"/>
    <property type="gene ID" value="ENSG00000183486.14"/>
</dbReference>
<dbReference type="Ensembl" id="ENST00000435611.6">
    <molecule id="P20592-1"/>
    <property type="protein sequence ID" value="ENSP00000389256.2"/>
    <property type="gene ID" value="ENSG00000183486.14"/>
</dbReference>
<dbReference type="Ensembl" id="ENST00000680862.1">
    <molecule id="P20592-1"/>
    <property type="protein sequence ID" value="ENSP00000506423.1"/>
    <property type="gene ID" value="ENSG00000183486.14"/>
</dbReference>
<dbReference type="GeneID" id="4600"/>
<dbReference type="KEGG" id="hsa:4600"/>
<dbReference type="MANE-Select" id="ENST00000330714.8">
    <property type="protein sequence ID" value="ENSP00000333657.3"/>
    <property type="RefSeq nucleotide sequence ID" value="NM_002463.2"/>
    <property type="RefSeq protein sequence ID" value="NP_002454.1"/>
</dbReference>
<dbReference type="UCSC" id="uc002yzf.2">
    <molecule id="P20592-1"/>
    <property type="organism name" value="human"/>
</dbReference>
<dbReference type="AGR" id="HGNC:7533"/>
<dbReference type="CTD" id="4600"/>
<dbReference type="DisGeNET" id="4600"/>
<dbReference type="GeneCards" id="MX2"/>
<dbReference type="HGNC" id="HGNC:7533">
    <property type="gene designation" value="MX2"/>
</dbReference>
<dbReference type="HPA" id="ENSG00000183486">
    <property type="expression patterns" value="Tissue enhanced (lymphoid)"/>
</dbReference>
<dbReference type="MIM" id="147890">
    <property type="type" value="gene"/>
</dbReference>
<dbReference type="neXtProt" id="NX_P20592"/>
<dbReference type="OpenTargets" id="ENSG00000183486"/>
<dbReference type="PharmGKB" id="PA31334"/>
<dbReference type="VEuPathDB" id="HostDB:ENSG00000183486"/>
<dbReference type="eggNOG" id="KOG0446">
    <property type="taxonomic scope" value="Eukaryota"/>
</dbReference>
<dbReference type="GeneTree" id="ENSGT00940000163266"/>
<dbReference type="HOGENOM" id="CLU_008964_8_0_1"/>
<dbReference type="InParanoid" id="P20592"/>
<dbReference type="OMA" id="PCIRDEE"/>
<dbReference type="OrthoDB" id="5061070at2759"/>
<dbReference type="PAN-GO" id="P20592">
    <property type="GO annotations" value="7 GO annotations based on evolutionary models"/>
</dbReference>
<dbReference type="PhylomeDB" id="P20592"/>
<dbReference type="TreeFam" id="TF331484"/>
<dbReference type="PathwayCommons" id="P20592"/>
<dbReference type="Reactome" id="R-HSA-1169408">
    <property type="pathway name" value="ISG15 antiviral mechanism"/>
</dbReference>
<dbReference type="Reactome" id="R-HSA-909733">
    <property type="pathway name" value="Interferon alpha/beta signaling"/>
</dbReference>
<dbReference type="SignaLink" id="P20592"/>
<dbReference type="BioGRID-ORCS" id="4600">
    <property type="hits" value="9 hits in 1159 CRISPR screens"/>
</dbReference>
<dbReference type="CD-CODE" id="D6A53B8E">
    <property type="entry name" value="Nuclear pore complex"/>
</dbReference>
<dbReference type="ChiTaRS" id="MX2">
    <property type="organism name" value="human"/>
</dbReference>
<dbReference type="EvolutionaryTrace" id="P20592"/>
<dbReference type="GeneWiki" id="MX2"/>
<dbReference type="GenomeRNAi" id="4600"/>
<dbReference type="Pharos" id="P20592">
    <property type="development level" value="Tbio"/>
</dbReference>
<dbReference type="PRO" id="PR:P20592"/>
<dbReference type="Proteomes" id="UP000005640">
    <property type="component" value="Chromosome 21"/>
</dbReference>
<dbReference type="RNAct" id="P20592">
    <property type="molecule type" value="protein"/>
</dbReference>
<dbReference type="Bgee" id="ENSG00000183486">
    <property type="expression patterns" value="Expressed in blood and 147 other cell types or tissues"/>
</dbReference>
<dbReference type="ExpressionAtlas" id="P20592">
    <property type="expression patterns" value="baseline and differential"/>
</dbReference>
<dbReference type="GO" id="GO:0005737">
    <property type="term" value="C:cytoplasm"/>
    <property type="evidence" value="ECO:0000318"/>
    <property type="project" value="GO_Central"/>
</dbReference>
<dbReference type="GO" id="GO:0005829">
    <property type="term" value="C:cytosol"/>
    <property type="evidence" value="ECO:0000304"/>
    <property type="project" value="Reactome"/>
</dbReference>
<dbReference type="GO" id="GO:0005874">
    <property type="term" value="C:microtubule"/>
    <property type="evidence" value="ECO:0000318"/>
    <property type="project" value="GO_Central"/>
</dbReference>
<dbReference type="GO" id="GO:0005643">
    <property type="term" value="C:nuclear pore"/>
    <property type="evidence" value="ECO:0000314"/>
    <property type="project" value="UniProtKB"/>
</dbReference>
<dbReference type="GO" id="GO:0005634">
    <property type="term" value="C:nucleus"/>
    <property type="evidence" value="ECO:0000318"/>
    <property type="project" value="GO_Central"/>
</dbReference>
<dbReference type="GO" id="GO:0005886">
    <property type="term" value="C:plasma membrane"/>
    <property type="evidence" value="ECO:0000318"/>
    <property type="project" value="GO_Central"/>
</dbReference>
<dbReference type="GO" id="GO:0098793">
    <property type="term" value="C:presynapse"/>
    <property type="evidence" value="ECO:0007669"/>
    <property type="project" value="GOC"/>
</dbReference>
<dbReference type="GO" id="GO:0045202">
    <property type="term" value="C:synapse"/>
    <property type="evidence" value="ECO:0000318"/>
    <property type="project" value="GO_Central"/>
</dbReference>
<dbReference type="GO" id="GO:0005525">
    <property type="term" value="F:GTP binding"/>
    <property type="evidence" value="ECO:0000315"/>
    <property type="project" value="UniProtKB"/>
</dbReference>
<dbReference type="GO" id="GO:0003924">
    <property type="term" value="F:GTPase activity"/>
    <property type="evidence" value="ECO:0000318"/>
    <property type="project" value="GO_Central"/>
</dbReference>
<dbReference type="GO" id="GO:0008017">
    <property type="term" value="F:microtubule binding"/>
    <property type="evidence" value="ECO:0000318"/>
    <property type="project" value="GO_Central"/>
</dbReference>
<dbReference type="GO" id="GO:0006952">
    <property type="term" value="P:defense response"/>
    <property type="evidence" value="ECO:0000304"/>
    <property type="project" value="ProtInc"/>
</dbReference>
<dbReference type="GO" id="GO:0051607">
    <property type="term" value="P:defense response to virus"/>
    <property type="evidence" value="ECO:0000315"/>
    <property type="project" value="UniProtKB"/>
</dbReference>
<dbReference type="GO" id="GO:0045087">
    <property type="term" value="P:innate immune response"/>
    <property type="evidence" value="ECO:0007669"/>
    <property type="project" value="UniProtKB-KW"/>
</dbReference>
<dbReference type="GO" id="GO:0051028">
    <property type="term" value="P:mRNA transport"/>
    <property type="evidence" value="ECO:0007669"/>
    <property type="project" value="UniProtKB-KW"/>
</dbReference>
<dbReference type="GO" id="GO:0015031">
    <property type="term" value="P:protein transport"/>
    <property type="evidence" value="ECO:0007669"/>
    <property type="project" value="UniProtKB-KW"/>
</dbReference>
<dbReference type="GO" id="GO:0031623">
    <property type="term" value="P:receptor internalization"/>
    <property type="evidence" value="ECO:0000318"/>
    <property type="project" value="GO_Central"/>
</dbReference>
<dbReference type="GO" id="GO:0051726">
    <property type="term" value="P:regulation of cell cycle"/>
    <property type="evidence" value="ECO:0000315"/>
    <property type="project" value="UniProtKB"/>
</dbReference>
<dbReference type="GO" id="GO:0046822">
    <property type="term" value="P:regulation of nucleocytoplasmic transport"/>
    <property type="evidence" value="ECO:0000315"/>
    <property type="project" value="UniProtKB"/>
</dbReference>
<dbReference type="GO" id="GO:0035455">
    <property type="term" value="P:response to interferon-alpha"/>
    <property type="evidence" value="ECO:0000314"/>
    <property type="project" value="UniProtKB"/>
</dbReference>
<dbReference type="GO" id="GO:0009615">
    <property type="term" value="P:response to virus"/>
    <property type="evidence" value="ECO:0000314"/>
    <property type="project" value="UniProtKB"/>
</dbReference>
<dbReference type="GO" id="GO:0016185">
    <property type="term" value="P:synaptic vesicle budding from presynaptic endocytic zone membrane"/>
    <property type="evidence" value="ECO:0000318"/>
    <property type="project" value="GO_Central"/>
</dbReference>
<dbReference type="CDD" id="cd08771">
    <property type="entry name" value="DLP_1"/>
    <property type="match status" value="1"/>
</dbReference>
<dbReference type="FunFam" id="1.20.120.1240:FF:000007">
    <property type="entry name" value="Interferon-induced GTP-binding protein Mx1"/>
    <property type="match status" value="1"/>
</dbReference>
<dbReference type="FunFam" id="3.40.50.300:FF:000621">
    <property type="entry name" value="Interferon-induced GTP-binding protein Mx1"/>
    <property type="match status" value="1"/>
</dbReference>
<dbReference type="Gene3D" id="1.20.120.1240">
    <property type="entry name" value="Dynamin, middle domain"/>
    <property type="match status" value="1"/>
</dbReference>
<dbReference type="Gene3D" id="3.40.50.300">
    <property type="entry name" value="P-loop containing nucleotide triphosphate hydrolases"/>
    <property type="match status" value="1"/>
</dbReference>
<dbReference type="InterPro" id="IPR022812">
    <property type="entry name" value="Dynamin"/>
</dbReference>
<dbReference type="InterPro" id="IPR001401">
    <property type="entry name" value="Dynamin_GTPase"/>
</dbReference>
<dbReference type="InterPro" id="IPR019762">
    <property type="entry name" value="Dynamin_GTPase_CS"/>
</dbReference>
<dbReference type="InterPro" id="IPR045063">
    <property type="entry name" value="Dynamin_N"/>
</dbReference>
<dbReference type="InterPro" id="IPR000375">
    <property type="entry name" value="Dynamin_stalk"/>
</dbReference>
<dbReference type="InterPro" id="IPR030381">
    <property type="entry name" value="G_DYNAMIN_dom"/>
</dbReference>
<dbReference type="InterPro" id="IPR003130">
    <property type="entry name" value="GED"/>
</dbReference>
<dbReference type="InterPro" id="IPR020850">
    <property type="entry name" value="GED_dom"/>
</dbReference>
<dbReference type="InterPro" id="IPR027417">
    <property type="entry name" value="P-loop_NTPase"/>
</dbReference>
<dbReference type="PANTHER" id="PTHR11566">
    <property type="entry name" value="DYNAMIN"/>
    <property type="match status" value="1"/>
</dbReference>
<dbReference type="PANTHER" id="PTHR11566:SF46">
    <property type="entry name" value="INTERFERON-INDUCED GTP-BINDING PROTEIN MX2"/>
    <property type="match status" value="1"/>
</dbReference>
<dbReference type="Pfam" id="PF01031">
    <property type="entry name" value="Dynamin_M"/>
    <property type="match status" value="1"/>
</dbReference>
<dbReference type="Pfam" id="PF00350">
    <property type="entry name" value="Dynamin_N"/>
    <property type="match status" value="1"/>
</dbReference>
<dbReference type="Pfam" id="PF02212">
    <property type="entry name" value="GED"/>
    <property type="match status" value="1"/>
</dbReference>
<dbReference type="PRINTS" id="PR00195">
    <property type="entry name" value="DYNAMIN"/>
</dbReference>
<dbReference type="SMART" id="SM00053">
    <property type="entry name" value="DYNc"/>
    <property type="match status" value="1"/>
</dbReference>
<dbReference type="SMART" id="SM00302">
    <property type="entry name" value="GED"/>
    <property type="match status" value="1"/>
</dbReference>
<dbReference type="SUPFAM" id="SSF52540">
    <property type="entry name" value="P-loop containing nucleoside triphosphate hydrolases"/>
    <property type="match status" value="1"/>
</dbReference>
<dbReference type="PROSITE" id="PS00410">
    <property type="entry name" value="G_DYNAMIN_1"/>
    <property type="match status" value="1"/>
</dbReference>
<dbReference type="PROSITE" id="PS51718">
    <property type="entry name" value="G_DYNAMIN_2"/>
    <property type="match status" value="1"/>
</dbReference>
<dbReference type="PROSITE" id="PS51388">
    <property type="entry name" value="GED"/>
    <property type="match status" value="1"/>
</dbReference>
<comment type="function">
    <text evidence="4 6 7 8">Interferon-induced dynamin-like GTPase with potent antiviral activity against human immunodeficiency virus type 1 (HIV-1). Acts by targeting the viral capsid and affects the nuclear uptake and/or stability of the HIV-1 replication complex and the subsequent chromosomal integration of the proviral DNA. Exhibits antiviral activity also against simian immunodeficiency virus (SIV-mnd). May play a role in regulating nucleocytoplasmic transport and cell-cycle progression.</text>
</comment>
<comment type="interaction">
    <interactant intactId="EBI-10200618">
        <id>P20592</id>
    </interactant>
    <interactant intactId="EBI-747353">
        <id>Q8WXE1</id>
        <label>ATRIP</label>
    </interactant>
    <organismsDiffer>false</organismsDiffer>
    <experiments>3</experiments>
</comment>
<comment type="interaction">
    <interactant intactId="EBI-10200618">
        <id>P20592</id>
    </interactant>
    <interactant intactId="EBI-10174566">
        <id>A2ABF9</id>
        <label>EHMT2</label>
    </interactant>
    <organismsDiffer>false</organismsDiffer>
    <experiments>3</experiments>
</comment>
<comment type="interaction">
    <interactant intactId="EBI-10200618">
        <id>P20592</id>
    </interactant>
    <interactant intactId="EBI-744366">
        <id>Q96KQ7</id>
        <label>EHMT2</label>
    </interactant>
    <organismsDiffer>false</organismsDiffer>
    <experiments>3</experiments>
</comment>
<comment type="interaction">
    <interactant intactId="EBI-10200618">
        <id>P20592</id>
    </interactant>
    <interactant intactId="EBI-348555">
        <id>O75928</id>
        <label>PIAS2</label>
    </interactant>
    <organismsDiffer>false</organismsDiffer>
    <experiments>3</experiments>
</comment>
<comment type="subcellular location">
    <subcellularLocation>
        <location evidence="4">Cytoplasm</location>
    </subcellularLocation>
    <subcellularLocation>
        <location evidence="4">Nucleus</location>
    </subcellularLocation>
    <subcellularLocation>
        <location evidence="4">Nucleus</location>
        <location evidence="4">Nuclear pore complex</location>
    </subcellularLocation>
    <text>Localization to nuclear pores requires GTP-binding.</text>
</comment>
<comment type="alternative products">
    <event type="alternative splicing"/>
    <isoform>
        <id>P20592-1</id>
        <name>1</name>
        <sequence type="displayed"/>
    </isoform>
    <isoform>
        <id>P20592-2</id>
        <name>2</name>
        <sequence type="described" ref="VSP_056443 VSP_056444 VSP_056445"/>
    </isoform>
</comment>
<comment type="induction">
    <text evidence="5">By type I and type III interferons.</text>
</comment>
<comment type="similarity">
    <text evidence="3">Belongs to the TRAFAC class dynamin-like GTPase superfamily. Dynamin/Fzo/YdjA family.</text>
</comment>
<sequence length="715" mass="82089">MSKAHKPWPYRRRSQFSSRKYLKKEMNSFQQQPPPFGTVPPQMMFPPNWQGAEKDAAFLAKDFNFLTLNNQPPPGNRSQPRAMGPENNLYSQYEQKVRPCIDLIDSLRALGVEQDLALPAIAVIGDQSSGKSSVLEALSGVALPRGSGIVTRCPLVLKLKKQPCEAWAGRISYRNTELELQDPGQVEKEIHKAQNVMAGNGRGISHELISLEITSPEVPDLTIIDLPGITRVAVDNQPRDIGLQIKALIKKYIQRQQTINLVVVPCNVDIATTEALSMAHEVDPEGDRTIGILTKPDLMDRGTEKSVMNVVRNLTYPLKKGYMIVKCRGQQEITNRLSLAEATKKEITFFQTHPYFRVLLEEGSATVPRLAERLTTELIMHIQKSLPLLEGQIRESHQKATEELRRCGADIPSQEADKMFFLIEKIKMFNQDIEKLVEGEEVVRENETRLYNKIREDFKNWVGILATNTQKVKNIIHEEVEKYEKQYRGKELLGFVNYKTFEIIVHQYIQQLVEPALSMLQKAMEIIQQAFINVAKKHFGEFFNLNQTVQSTIEDIKVKHTAKAENMIQLQFRMEQMVFCQDQIYSVVLKKVREEIFNPLGTPSQNMKLNSHFPSNESSVSSFTEIGIHLNAYFLETSKRLANQIPFIIQYFMLRENGDSLQKAMMQILQEKNRYSWLLQEQSETATKRRILKERIYRLTQARHALCQFSSKEIH</sequence>
<protein>
    <recommendedName>
        <fullName>Interferon-induced GTP-binding protein Mx2</fullName>
    </recommendedName>
    <alternativeName>
        <fullName>Interferon-regulated resistance GTP-binding protein MxB</fullName>
    </alternativeName>
    <alternativeName>
        <fullName>Myxovirus resistance protein 2</fullName>
    </alternativeName>
    <alternativeName>
        <fullName>p78-related protein</fullName>
    </alternativeName>
</protein>
<keyword id="KW-0002">3D-structure</keyword>
<keyword id="KW-0025">Alternative splicing</keyword>
<keyword id="KW-0051">Antiviral defense</keyword>
<keyword id="KW-0963">Cytoplasm</keyword>
<keyword id="KW-0342">GTP-binding</keyword>
<keyword id="KW-0391">Immunity</keyword>
<keyword id="KW-0399">Innate immunity</keyword>
<keyword id="KW-0509">mRNA transport</keyword>
<keyword id="KW-0906">Nuclear pore complex</keyword>
<keyword id="KW-0547">Nucleotide-binding</keyword>
<keyword id="KW-0539">Nucleus</keyword>
<keyword id="KW-0653">Protein transport</keyword>
<keyword id="KW-1267">Proteomics identification</keyword>
<keyword id="KW-1185">Reference proteome</keyword>
<keyword id="KW-0811">Translocation</keyword>
<keyword id="KW-0813">Transport</keyword>
<proteinExistence type="evidence at protein level"/>
<accession>P20592</accession>
<accession>B7Z5D3</accession>
<accession>D3DSI7</accession>
<name>MX2_HUMAN</name>
<feature type="chain" id="PRO_0000206598" description="Interferon-induced GTP-binding protein Mx2">
    <location>
        <begin position="1"/>
        <end position="715"/>
    </location>
</feature>
<feature type="domain" description="Dynamin-type G" evidence="3">
    <location>
        <begin position="115"/>
        <end position="387"/>
    </location>
</feature>
<feature type="domain" description="GED" evidence="2">
    <location>
        <begin position="623"/>
        <end position="714"/>
    </location>
</feature>
<feature type="region of interest" description="G1 motif" evidence="3">
    <location>
        <begin position="125"/>
        <end position="132"/>
    </location>
</feature>
<feature type="region of interest" description="G2 motif" evidence="3">
    <location>
        <begin position="150"/>
        <end position="152"/>
    </location>
</feature>
<feature type="region of interest" description="G3 motif" evidence="3">
    <location>
        <begin position="225"/>
        <end position="228"/>
    </location>
</feature>
<feature type="region of interest" description="G4 motif" evidence="3">
    <location>
        <begin position="294"/>
        <end position="297"/>
    </location>
</feature>
<feature type="region of interest" description="G5 motif" evidence="3">
    <location>
        <begin position="326"/>
        <end position="329"/>
    </location>
</feature>
<feature type="binding site" evidence="1">
    <location>
        <begin position="125"/>
        <end position="132"/>
    </location>
    <ligand>
        <name>GTP</name>
        <dbReference type="ChEBI" id="CHEBI:37565"/>
    </ligand>
</feature>
<feature type="binding site" evidence="1">
    <location>
        <begin position="225"/>
        <end position="229"/>
    </location>
    <ligand>
        <name>GTP</name>
        <dbReference type="ChEBI" id="CHEBI:37565"/>
    </ligand>
</feature>
<feature type="binding site" evidence="1">
    <location>
        <begin position="294"/>
        <end position="297"/>
    </location>
    <ligand>
        <name>GTP</name>
        <dbReference type="ChEBI" id="CHEBI:37565"/>
    </ligand>
</feature>
<feature type="splice variant" id="VSP_056443" description="In isoform 2." evidence="9">
    <location>
        <begin position="148"/>
        <end position="192"/>
    </location>
</feature>
<feature type="splice variant" id="VSP_056444" description="In isoform 2." evidence="9">
    <original>IK</original>
    <variation>VS</variation>
    <location>
        <begin position="245"/>
        <end position="246"/>
    </location>
</feature>
<feature type="splice variant" id="VSP_056445" description="In isoform 2." evidence="9">
    <location>
        <begin position="247"/>
        <end position="715"/>
    </location>
</feature>
<feature type="mutagenesis site" description="Loss of GTP-binding and localization to nuclear pore. Disruption of nuclear import." evidence="4">
    <original>K</original>
    <variation>A</variation>
    <location>
        <position position="131"/>
    </location>
</feature>
<feature type="mutagenesis site" description="Defective GTP-hydrolysis. Disruption of nuclear import and cell-cycle progression." evidence="4">
    <original>T</original>
    <variation>A</variation>
    <location>
        <position position="151"/>
    </location>
</feature>
<feature type="helix" evidence="10">
    <location>
        <begin position="94"/>
        <end position="109"/>
    </location>
</feature>
<feature type="strand" evidence="10">
    <location>
        <begin position="120"/>
        <end position="126"/>
    </location>
</feature>
<feature type="helix" evidence="10">
    <location>
        <begin position="131"/>
        <end position="139"/>
    </location>
</feature>
<feature type="strand" evidence="10">
    <location>
        <begin position="155"/>
        <end position="160"/>
    </location>
</feature>
<feature type="strand" evidence="10">
    <location>
        <begin position="167"/>
        <end position="172"/>
    </location>
</feature>
<feature type="turn" evidence="10">
    <location>
        <begin position="173"/>
        <end position="175"/>
    </location>
</feature>
<feature type="strand" evidence="10">
    <location>
        <begin position="176"/>
        <end position="179"/>
    </location>
</feature>
<feature type="helix" evidence="10">
    <location>
        <begin position="183"/>
        <end position="198"/>
    </location>
</feature>
<feature type="strand" evidence="10">
    <location>
        <begin position="200"/>
        <end position="202"/>
    </location>
</feature>
<feature type="strand" evidence="10">
    <location>
        <begin position="209"/>
        <end position="214"/>
    </location>
</feature>
<feature type="strand" evidence="10">
    <location>
        <begin position="220"/>
        <end position="225"/>
    </location>
</feature>
<feature type="helix" evidence="10">
    <location>
        <begin position="242"/>
        <end position="253"/>
    </location>
</feature>
<feature type="strand" evidence="10">
    <location>
        <begin position="258"/>
        <end position="265"/>
    </location>
</feature>
<feature type="helix" evidence="10">
    <location>
        <begin position="270"/>
        <end position="272"/>
    </location>
</feature>
<feature type="helix" evidence="10">
    <location>
        <begin position="274"/>
        <end position="282"/>
    </location>
</feature>
<feature type="strand" evidence="10">
    <location>
        <begin position="287"/>
        <end position="294"/>
    </location>
</feature>
<feature type="strand" evidence="10">
    <location>
        <begin position="296"/>
        <end position="298"/>
    </location>
</feature>
<feature type="helix" evidence="10">
    <location>
        <begin position="302"/>
        <end position="312"/>
    </location>
</feature>
<feature type="strand" evidence="10">
    <location>
        <begin position="322"/>
        <end position="324"/>
    </location>
</feature>
<feature type="helix" evidence="10">
    <location>
        <begin position="339"/>
        <end position="352"/>
    </location>
</feature>
<feature type="helix" evidence="10">
    <location>
        <begin position="356"/>
        <end position="361"/>
    </location>
</feature>
<feature type="strand" evidence="10">
    <location>
        <begin position="362"/>
        <end position="364"/>
    </location>
</feature>
<feature type="helix" evidence="10">
    <location>
        <begin position="370"/>
        <end position="406"/>
    </location>
</feature>
<feature type="turn" evidence="10">
    <location>
        <begin position="413"/>
        <end position="415"/>
    </location>
</feature>
<feature type="helix" evidence="11">
    <location>
        <begin position="418"/>
        <end position="421"/>
    </location>
</feature>
<feature type="helix" evidence="11">
    <location>
        <begin position="422"/>
        <end position="438"/>
    </location>
</feature>
<feature type="helix" evidence="11">
    <location>
        <begin position="450"/>
        <end position="487"/>
    </location>
</feature>
<feature type="helix" evidence="11">
    <location>
        <begin position="500"/>
        <end position="539"/>
    </location>
</feature>
<feature type="helix" evidence="11">
    <location>
        <begin position="543"/>
        <end position="579"/>
    </location>
</feature>
<feature type="helix" evidence="11">
    <location>
        <begin position="623"/>
        <end position="653"/>
    </location>
</feature>
<feature type="helix" evidence="11">
    <location>
        <begin position="655"/>
        <end position="668"/>
    </location>
</feature>
<feature type="helix" evidence="11">
    <location>
        <begin position="672"/>
        <end position="677"/>
    </location>
</feature>
<feature type="helix" evidence="10">
    <location>
        <begin position="685"/>
        <end position="710"/>
    </location>
</feature>